<keyword id="KW-0227">DNA damage</keyword>
<keyword id="KW-0234">DNA repair</keyword>
<keyword id="KW-0238">DNA-binding</keyword>
<keyword id="KW-0326">Glycosidase</keyword>
<keyword id="KW-0378">Hydrolase</keyword>
<keyword id="KW-0456">Lyase</keyword>
<keyword id="KW-0479">Metal-binding</keyword>
<keyword id="KW-0511">Multifunctional enzyme</keyword>
<keyword id="KW-1185">Reference proteome</keyword>
<keyword id="KW-0862">Zinc</keyword>
<keyword id="KW-0863">Zinc-finger</keyword>
<organism>
    <name type="scientific">Cupriavidus metallidurans (strain ATCC 43123 / DSM 2839 / NBRC 102507 / CH34)</name>
    <name type="common">Ralstonia metallidurans</name>
    <dbReference type="NCBI Taxonomy" id="266264"/>
    <lineage>
        <taxon>Bacteria</taxon>
        <taxon>Pseudomonadati</taxon>
        <taxon>Pseudomonadota</taxon>
        <taxon>Betaproteobacteria</taxon>
        <taxon>Burkholderiales</taxon>
        <taxon>Burkholderiaceae</taxon>
        <taxon>Cupriavidus</taxon>
    </lineage>
</organism>
<evidence type="ECO:0000250" key="1"/>
<evidence type="ECO:0000255" key="2">
    <source>
        <dbReference type="HAMAP-Rule" id="MF_00103"/>
    </source>
</evidence>
<gene>
    <name evidence="2" type="primary">mutM</name>
    <name evidence="2" type="synonym">fpg</name>
    <name type="ordered locus">Rmet_0293</name>
</gene>
<protein>
    <recommendedName>
        <fullName evidence="2">Formamidopyrimidine-DNA glycosylase</fullName>
        <shortName evidence="2">Fapy-DNA glycosylase</shortName>
        <ecNumber evidence="2">3.2.2.23</ecNumber>
    </recommendedName>
    <alternativeName>
        <fullName evidence="2">DNA-(apurinic or apyrimidinic site) lyase MutM</fullName>
        <shortName evidence="2">AP lyase MutM</shortName>
        <ecNumber evidence="2">4.2.99.18</ecNumber>
    </alternativeName>
</protein>
<reference key="1">
    <citation type="journal article" date="2010" name="PLoS ONE">
        <title>The complete genome sequence of Cupriavidus metallidurans strain CH34, a master survivalist in harsh and anthropogenic environments.</title>
        <authorList>
            <person name="Janssen P.J."/>
            <person name="Van Houdt R."/>
            <person name="Moors H."/>
            <person name="Monsieurs P."/>
            <person name="Morin N."/>
            <person name="Michaux A."/>
            <person name="Benotmane M.A."/>
            <person name="Leys N."/>
            <person name="Vallaeys T."/>
            <person name="Lapidus A."/>
            <person name="Monchy S."/>
            <person name="Medigue C."/>
            <person name="Taghavi S."/>
            <person name="McCorkle S."/>
            <person name="Dunn J."/>
            <person name="van der Lelie D."/>
            <person name="Mergeay M."/>
        </authorList>
    </citation>
    <scope>NUCLEOTIDE SEQUENCE [LARGE SCALE GENOMIC DNA]</scope>
    <source>
        <strain>ATCC 43123 / DSM 2839 / NBRC 102507 / CH34</strain>
    </source>
</reference>
<sequence length="297" mass="32540">MPELPEVEVTRRGLLPHVVGRRIADVIVRHRGLRWPVEPELEARLTGRIIGRIERRGKYLLLECLPPADATRAGTGEDAAPGWLLVHLGMTGTLRVYPAPPAPGAHDHLDLLLAAGPDTAEAEPVVLRFRDPRRFGAILWTPLAESDLPGHPLLSRLGIEPFDPRFDGAWLHRGMRGRSMAIKQALLAGDVVVGVGNIYCSESLFRAGIRPTTQAGRLSLARCEKLAVAVRETLAEAIARGGSTLRDFVGSDGSSGYFQLDCFVYDRAGEPCRICGTPIRQILQGQRSTFYCPHCQH</sequence>
<dbReference type="EC" id="3.2.2.23" evidence="2"/>
<dbReference type="EC" id="4.2.99.18" evidence="2"/>
<dbReference type="EMBL" id="CP000352">
    <property type="protein sequence ID" value="ABF07179.1"/>
    <property type="molecule type" value="Genomic_DNA"/>
</dbReference>
<dbReference type="RefSeq" id="WP_011515181.1">
    <property type="nucleotide sequence ID" value="NC_007973.1"/>
</dbReference>
<dbReference type="SMR" id="Q1LRP7"/>
<dbReference type="STRING" id="266264.Rmet_0293"/>
<dbReference type="KEGG" id="rme:Rmet_0293"/>
<dbReference type="eggNOG" id="COG0266">
    <property type="taxonomic scope" value="Bacteria"/>
</dbReference>
<dbReference type="HOGENOM" id="CLU_038423_1_1_4"/>
<dbReference type="Proteomes" id="UP000002429">
    <property type="component" value="Chromosome"/>
</dbReference>
<dbReference type="GO" id="GO:0034039">
    <property type="term" value="F:8-oxo-7,8-dihydroguanine DNA N-glycosylase activity"/>
    <property type="evidence" value="ECO:0007669"/>
    <property type="project" value="TreeGrafter"/>
</dbReference>
<dbReference type="GO" id="GO:0140078">
    <property type="term" value="F:class I DNA-(apurinic or apyrimidinic site) endonuclease activity"/>
    <property type="evidence" value="ECO:0007669"/>
    <property type="project" value="UniProtKB-EC"/>
</dbReference>
<dbReference type="GO" id="GO:0003684">
    <property type="term" value="F:damaged DNA binding"/>
    <property type="evidence" value="ECO:0007669"/>
    <property type="project" value="InterPro"/>
</dbReference>
<dbReference type="GO" id="GO:0008270">
    <property type="term" value="F:zinc ion binding"/>
    <property type="evidence" value="ECO:0007669"/>
    <property type="project" value="UniProtKB-UniRule"/>
</dbReference>
<dbReference type="GO" id="GO:0006284">
    <property type="term" value="P:base-excision repair"/>
    <property type="evidence" value="ECO:0007669"/>
    <property type="project" value="InterPro"/>
</dbReference>
<dbReference type="CDD" id="cd08966">
    <property type="entry name" value="EcFpg-like_N"/>
    <property type="match status" value="1"/>
</dbReference>
<dbReference type="FunFam" id="1.10.8.50:FF:000003">
    <property type="entry name" value="Formamidopyrimidine-DNA glycosylase"/>
    <property type="match status" value="1"/>
</dbReference>
<dbReference type="Gene3D" id="1.10.8.50">
    <property type="match status" value="1"/>
</dbReference>
<dbReference type="Gene3D" id="3.20.190.10">
    <property type="entry name" value="MutM-like, N-terminal"/>
    <property type="match status" value="1"/>
</dbReference>
<dbReference type="HAMAP" id="MF_00103">
    <property type="entry name" value="Fapy_DNA_glycosyl"/>
    <property type="match status" value="1"/>
</dbReference>
<dbReference type="InterPro" id="IPR015886">
    <property type="entry name" value="DNA_glyclase/AP_lyase_DNA-bd"/>
</dbReference>
<dbReference type="InterPro" id="IPR015887">
    <property type="entry name" value="DNA_glyclase_Znf_dom_DNA_BS"/>
</dbReference>
<dbReference type="InterPro" id="IPR020629">
    <property type="entry name" value="Formamido-pyr_DNA_Glyclase"/>
</dbReference>
<dbReference type="InterPro" id="IPR012319">
    <property type="entry name" value="FPG_cat"/>
</dbReference>
<dbReference type="InterPro" id="IPR035937">
    <property type="entry name" value="MutM-like_N-ter"/>
</dbReference>
<dbReference type="InterPro" id="IPR010979">
    <property type="entry name" value="Ribosomal_uS13-like_H2TH"/>
</dbReference>
<dbReference type="InterPro" id="IPR000214">
    <property type="entry name" value="Znf_DNA_glyclase/AP_lyase"/>
</dbReference>
<dbReference type="InterPro" id="IPR010663">
    <property type="entry name" value="Znf_FPG/IleRS"/>
</dbReference>
<dbReference type="NCBIfam" id="TIGR00577">
    <property type="entry name" value="fpg"/>
    <property type="match status" value="1"/>
</dbReference>
<dbReference type="NCBIfam" id="NF002211">
    <property type="entry name" value="PRK01103.1"/>
    <property type="match status" value="1"/>
</dbReference>
<dbReference type="PANTHER" id="PTHR22993">
    <property type="entry name" value="FORMAMIDOPYRIMIDINE-DNA GLYCOSYLASE"/>
    <property type="match status" value="1"/>
</dbReference>
<dbReference type="PANTHER" id="PTHR22993:SF9">
    <property type="entry name" value="FORMAMIDOPYRIMIDINE-DNA GLYCOSYLASE"/>
    <property type="match status" value="1"/>
</dbReference>
<dbReference type="Pfam" id="PF01149">
    <property type="entry name" value="Fapy_DNA_glyco"/>
    <property type="match status" value="1"/>
</dbReference>
<dbReference type="Pfam" id="PF06831">
    <property type="entry name" value="H2TH"/>
    <property type="match status" value="1"/>
</dbReference>
<dbReference type="Pfam" id="PF06827">
    <property type="entry name" value="zf-FPG_IleRS"/>
    <property type="match status" value="1"/>
</dbReference>
<dbReference type="SMART" id="SM00898">
    <property type="entry name" value="Fapy_DNA_glyco"/>
    <property type="match status" value="1"/>
</dbReference>
<dbReference type="SMART" id="SM01232">
    <property type="entry name" value="H2TH"/>
    <property type="match status" value="1"/>
</dbReference>
<dbReference type="SUPFAM" id="SSF57716">
    <property type="entry name" value="Glucocorticoid receptor-like (DNA-binding domain)"/>
    <property type="match status" value="1"/>
</dbReference>
<dbReference type="SUPFAM" id="SSF81624">
    <property type="entry name" value="N-terminal domain of MutM-like DNA repair proteins"/>
    <property type="match status" value="1"/>
</dbReference>
<dbReference type="SUPFAM" id="SSF46946">
    <property type="entry name" value="S13-like H2TH domain"/>
    <property type="match status" value="1"/>
</dbReference>
<dbReference type="PROSITE" id="PS51068">
    <property type="entry name" value="FPG_CAT"/>
    <property type="match status" value="1"/>
</dbReference>
<dbReference type="PROSITE" id="PS01242">
    <property type="entry name" value="ZF_FPG_1"/>
    <property type="match status" value="1"/>
</dbReference>
<dbReference type="PROSITE" id="PS51066">
    <property type="entry name" value="ZF_FPG_2"/>
    <property type="match status" value="1"/>
</dbReference>
<accession>Q1LRP7</accession>
<comment type="function">
    <text evidence="2">Involved in base excision repair of DNA damaged by oxidation or by mutagenic agents. Acts as a DNA glycosylase that recognizes and removes damaged bases. Has a preference for oxidized purines, such as 7,8-dihydro-8-oxoguanine (8-oxoG). Has AP (apurinic/apyrimidinic) lyase activity and introduces nicks in the DNA strand. Cleaves the DNA backbone by beta-delta elimination to generate a single-strand break at the site of the removed base with both 3'- and 5'-phosphates.</text>
</comment>
<comment type="catalytic activity">
    <reaction evidence="2">
        <text>Hydrolysis of DNA containing ring-opened 7-methylguanine residues, releasing 2,6-diamino-4-hydroxy-5-(N-methyl)formamidopyrimidine.</text>
        <dbReference type="EC" id="3.2.2.23"/>
    </reaction>
</comment>
<comment type="catalytic activity">
    <reaction evidence="2">
        <text>2'-deoxyribonucleotide-(2'-deoxyribose 5'-phosphate)-2'-deoxyribonucleotide-DNA = a 3'-end 2'-deoxyribonucleotide-(2,3-dehydro-2,3-deoxyribose 5'-phosphate)-DNA + a 5'-end 5'-phospho-2'-deoxyribonucleoside-DNA + H(+)</text>
        <dbReference type="Rhea" id="RHEA:66592"/>
        <dbReference type="Rhea" id="RHEA-COMP:13180"/>
        <dbReference type="Rhea" id="RHEA-COMP:16897"/>
        <dbReference type="Rhea" id="RHEA-COMP:17067"/>
        <dbReference type="ChEBI" id="CHEBI:15378"/>
        <dbReference type="ChEBI" id="CHEBI:136412"/>
        <dbReference type="ChEBI" id="CHEBI:157695"/>
        <dbReference type="ChEBI" id="CHEBI:167181"/>
        <dbReference type="EC" id="4.2.99.18"/>
    </reaction>
</comment>
<comment type="cofactor">
    <cofactor evidence="2">
        <name>Zn(2+)</name>
        <dbReference type="ChEBI" id="CHEBI:29105"/>
    </cofactor>
    <text evidence="2">Binds 1 zinc ion per subunit.</text>
</comment>
<comment type="subunit">
    <text evidence="2">Monomer.</text>
</comment>
<comment type="similarity">
    <text evidence="2">Belongs to the FPG family.</text>
</comment>
<feature type="initiator methionine" description="Removed" evidence="1">
    <location>
        <position position="1"/>
    </location>
</feature>
<feature type="chain" id="PRO_1000008749" description="Formamidopyrimidine-DNA glycosylase">
    <location>
        <begin position="2"/>
        <end position="297"/>
    </location>
</feature>
<feature type="zinc finger region" description="FPG-type" evidence="2">
    <location>
        <begin position="263"/>
        <end position="297"/>
    </location>
</feature>
<feature type="active site" description="Schiff-base intermediate with DNA" evidence="2">
    <location>
        <position position="2"/>
    </location>
</feature>
<feature type="active site" description="Proton donor" evidence="2">
    <location>
        <position position="3"/>
    </location>
</feature>
<feature type="active site" description="Proton donor; for beta-elimination activity" evidence="2">
    <location>
        <position position="58"/>
    </location>
</feature>
<feature type="active site" description="Proton donor; for delta-elimination activity" evidence="2">
    <location>
        <position position="287"/>
    </location>
</feature>
<feature type="binding site" evidence="2">
    <location>
        <position position="106"/>
    </location>
    <ligand>
        <name>DNA</name>
        <dbReference type="ChEBI" id="CHEBI:16991"/>
    </ligand>
</feature>
<feature type="binding site" evidence="2">
    <location>
        <position position="133"/>
    </location>
    <ligand>
        <name>DNA</name>
        <dbReference type="ChEBI" id="CHEBI:16991"/>
    </ligand>
</feature>
<feature type="binding site" evidence="2">
    <location>
        <position position="178"/>
    </location>
    <ligand>
        <name>DNA</name>
        <dbReference type="ChEBI" id="CHEBI:16991"/>
    </ligand>
</feature>
<name>FPG_CUPMC</name>
<proteinExistence type="inferred from homology"/>